<feature type="signal peptide" evidence="2">
    <location>
        <begin position="1"/>
        <end position="17"/>
    </location>
</feature>
<feature type="chain" id="PRO_0000089623" description="Chorion protein S18">
    <location>
        <begin position="18"/>
        <end position="170"/>
    </location>
</feature>
<feature type="region of interest" description="Disordered" evidence="3">
    <location>
        <begin position="146"/>
        <end position="170"/>
    </location>
</feature>
<feature type="compositionally biased region" description="Low complexity" evidence="3">
    <location>
        <begin position="146"/>
        <end position="159"/>
    </location>
</feature>
<feature type="compositionally biased region" description="Polar residues" evidence="3">
    <location>
        <begin position="160"/>
        <end position="170"/>
    </location>
</feature>
<dbReference type="EMBL" id="X53421">
    <property type="protein sequence ID" value="CAA37500.1"/>
    <property type="molecule type" value="Genomic_DNA"/>
</dbReference>
<dbReference type="EMBL" id="CH940647">
    <property type="protein sequence ID" value="EDW69112.1"/>
    <property type="molecule type" value="Genomic_DNA"/>
</dbReference>
<dbReference type="PIR" id="S13218">
    <property type="entry name" value="S13218"/>
</dbReference>
<dbReference type="RefSeq" id="XP_002046770.1">
    <property type="nucleotide sequence ID" value="XM_002046734.4"/>
</dbReference>
<dbReference type="STRING" id="7244.P24515"/>
<dbReference type="EnsemblMetazoa" id="FBtr0228991">
    <property type="protein sequence ID" value="FBpp0227483"/>
    <property type="gene ID" value="FBgn0013070"/>
</dbReference>
<dbReference type="EnsemblMetazoa" id="XM_002046734.3">
    <property type="protein sequence ID" value="XP_002046770.1"/>
    <property type="gene ID" value="LOC6623410"/>
</dbReference>
<dbReference type="GeneID" id="6623410"/>
<dbReference type="KEGG" id="dvi:6623410"/>
<dbReference type="CTD" id="38998"/>
<dbReference type="eggNOG" id="ENOG502TBAZ">
    <property type="taxonomic scope" value="Eukaryota"/>
</dbReference>
<dbReference type="HOGENOM" id="CLU_1541752_0_0_1"/>
<dbReference type="InParanoid" id="P24515"/>
<dbReference type="OMA" id="FMCIFVC"/>
<dbReference type="OrthoDB" id="7862390at2759"/>
<dbReference type="PhylomeDB" id="P24515"/>
<dbReference type="Proteomes" id="UP000008792">
    <property type="component" value="Unassembled WGS sequence"/>
</dbReference>
<dbReference type="GO" id="GO:0042600">
    <property type="term" value="C:egg chorion"/>
    <property type="evidence" value="ECO:0007669"/>
    <property type="project" value="InterPro"/>
</dbReference>
<dbReference type="GO" id="GO:0005576">
    <property type="term" value="C:extracellular region"/>
    <property type="evidence" value="ECO:0007669"/>
    <property type="project" value="UniProtKB-SubCell"/>
</dbReference>
<dbReference type="GO" id="GO:0007304">
    <property type="term" value="P:chorion-containing eggshell formation"/>
    <property type="evidence" value="ECO:0007669"/>
    <property type="project" value="EnsemblMetazoa"/>
</dbReference>
<dbReference type="InterPro" id="IPR005649">
    <property type="entry name" value="Chorion_2"/>
</dbReference>
<dbReference type="Pfam" id="PF03964">
    <property type="entry name" value="Chorion_2"/>
    <property type="match status" value="1"/>
</dbReference>
<name>CH18_DROVI</name>
<accession>P24515</accession>
<accession>B4LEM7</accession>
<protein>
    <recommendedName>
        <fullName>Chorion protein S18</fullName>
    </recommendedName>
</protein>
<proteinExistence type="inferred from homology"/>
<organism>
    <name type="scientific">Drosophila virilis</name>
    <name type="common">Fruit fly</name>
    <dbReference type="NCBI Taxonomy" id="7244"/>
    <lineage>
        <taxon>Eukaryota</taxon>
        <taxon>Metazoa</taxon>
        <taxon>Ecdysozoa</taxon>
        <taxon>Arthropoda</taxon>
        <taxon>Hexapoda</taxon>
        <taxon>Insecta</taxon>
        <taxon>Pterygota</taxon>
        <taxon>Neoptera</taxon>
        <taxon>Endopterygota</taxon>
        <taxon>Diptera</taxon>
        <taxon>Brachycera</taxon>
        <taxon>Muscomorpha</taxon>
        <taxon>Ephydroidea</taxon>
        <taxon>Drosophilidae</taxon>
        <taxon>Drosophila</taxon>
    </lineage>
</organism>
<comment type="function">
    <text evidence="1">Chorion membrane (egg shell) protein; plays a role in protecting the egg from the environment.</text>
</comment>
<comment type="subcellular location">
    <subcellularLocation>
        <location evidence="1">Secreted</location>
    </subcellularLocation>
</comment>
<comment type="similarity">
    <text evidence="4">Belongs to the chorion protein S15/S18 family.</text>
</comment>
<gene>
    <name type="primary">Cp18</name>
    <name type="synonym">S18</name>
    <name type="ORF">GJ13066</name>
</gene>
<keyword id="KW-1185">Reference proteome</keyword>
<keyword id="KW-0964">Secreted</keyword>
<keyword id="KW-0732">Signal</keyword>
<evidence type="ECO:0000250" key="1"/>
<evidence type="ECO:0000255" key="2"/>
<evidence type="ECO:0000256" key="3">
    <source>
        <dbReference type="SAM" id="MobiDB-lite"/>
    </source>
</evidence>
<evidence type="ECO:0000305" key="4"/>
<reference key="1">
    <citation type="journal article" date="1990" name="J. Mol. Biol.">
        <title>Evolution of the autosomal chorion cluster in Drosophila. III. Comparison of the s18 gene in evolutionarily distant species and heterospecific control of chorion gene amplification.</title>
        <authorList>
            <person name="Swimmer C."/>
            <person name="Fenerjian M.G."/>
            <person name="Martinez-Cruzado J.C."/>
            <person name="Kafatos F.C."/>
        </authorList>
    </citation>
    <scope>NUCLEOTIDE SEQUENCE [GENOMIC DNA]</scope>
</reference>
<reference key="2">
    <citation type="journal article" date="2007" name="Nature">
        <title>Evolution of genes and genomes on the Drosophila phylogeny.</title>
        <authorList>
            <consortium name="Drosophila 12 genomes consortium"/>
        </authorList>
    </citation>
    <scope>NUCLEOTIDE SEQUENCE [LARGE SCALE GENOMIC DNA]</scope>
    <source>
        <strain>Tucson 15010-1051.87</strain>
    </source>
</reference>
<sequence>MMKFMCIFVCAIAAVSANAYGRQGYGSVPVGGYAYQVQPALTVKAIVPAGGYGGGSYGGGYGNNNYGRSIEVPVSAHYTSSRGYGAAPVDRQAISLAKLSLAAPNAGAPLVWKEPRQIVERSYGPQQSYGQKHSYGYGEQAQGASAAAASSSVAGQHSGYKNSGYKNSSY</sequence>